<name>RNC_STRP1</name>
<accession>P66670</accession>
<accession>Q490B2</accession>
<accession>Q9A105</accession>
<dbReference type="EC" id="3.1.26.3" evidence="2"/>
<dbReference type="EMBL" id="AE004092">
    <property type="protein sequence ID" value="AAK33526.1"/>
    <property type="molecule type" value="Genomic_DNA"/>
</dbReference>
<dbReference type="EMBL" id="CP000017">
    <property type="protein sequence ID" value="AAZ51056.1"/>
    <property type="molecule type" value="Genomic_DNA"/>
</dbReference>
<dbReference type="RefSeq" id="NP_268805.1">
    <property type="nucleotide sequence ID" value="NC_002737.2"/>
</dbReference>
<dbReference type="SMR" id="P66670"/>
<dbReference type="PaxDb" id="1314-HKU360_00461"/>
<dbReference type="KEGG" id="spy:SPy_0531"/>
<dbReference type="KEGG" id="spz:M5005_Spy0438"/>
<dbReference type="PATRIC" id="fig|160490.10.peg.453"/>
<dbReference type="HOGENOM" id="CLU_000907_1_3_9"/>
<dbReference type="OMA" id="LTHKSCK"/>
<dbReference type="BRENDA" id="3.1.26.3">
    <property type="organism ID" value="11745"/>
</dbReference>
<dbReference type="Proteomes" id="UP000000750">
    <property type="component" value="Chromosome"/>
</dbReference>
<dbReference type="GO" id="GO:0005737">
    <property type="term" value="C:cytoplasm"/>
    <property type="evidence" value="ECO:0007669"/>
    <property type="project" value="UniProtKB-SubCell"/>
</dbReference>
<dbReference type="GO" id="GO:0003725">
    <property type="term" value="F:double-stranded RNA binding"/>
    <property type="evidence" value="ECO:0007669"/>
    <property type="project" value="TreeGrafter"/>
</dbReference>
<dbReference type="GO" id="GO:0046872">
    <property type="term" value="F:metal ion binding"/>
    <property type="evidence" value="ECO:0007669"/>
    <property type="project" value="UniProtKB-KW"/>
</dbReference>
<dbReference type="GO" id="GO:0004525">
    <property type="term" value="F:ribonuclease III activity"/>
    <property type="evidence" value="ECO:0007669"/>
    <property type="project" value="UniProtKB-UniRule"/>
</dbReference>
<dbReference type="GO" id="GO:0019843">
    <property type="term" value="F:rRNA binding"/>
    <property type="evidence" value="ECO:0007669"/>
    <property type="project" value="UniProtKB-KW"/>
</dbReference>
<dbReference type="GO" id="GO:0051607">
    <property type="term" value="P:defense response to virus"/>
    <property type="evidence" value="ECO:0007669"/>
    <property type="project" value="UniProtKB-KW"/>
</dbReference>
<dbReference type="GO" id="GO:0006397">
    <property type="term" value="P:mRNA processing"/>
    <property type="evidence" value="ECO:0007669"/>
    <property type="project" value="UniProtKB-UniRule"/>
</dbReference>
<dbReference type="GO" id="GO:0010468">
    <property type="term" value="P:regulation of gene expression"/>
    <property type="evidence" value="ECO:0007669"/>
    <property type="project" value="TreeGrafter"/>
</dbReference>
<dbReference type="GO" id="GO:0006364">
    <property type="term" value="P:rRNA processing"/>
    <property type="evidence" value="ECO:0007669"/>
    <property type="project" value="UniProtKB-UniRule"/>
</dbReference>
<dbReference type="GO" id="GO:0008033">
    <property type="term" value="P:tRNA processing"/>
    <property type="evidence" value="ECO:0007669"/>
    <property type="project" value="UniProtKB-KW"/>
</dbReference>
<dbReference type="CDD" id="cd10845">
    <property type="entry name" value="DSRM_RNAse_III_family"/>
    <property type="match status" value="1"/>
</dbReference>
<dbReference type="CDD" id="cd00593">
    <property type="entry name" value="RIBOc"/>
    <property type="match status" value="1"/>
</dbReference>
<dbReference type="FunFam" id="1.10.1520.10:FF:000001">
    <property type="entry name" value="Ribonuclease 3"/>
    <property type="match status" value="1"/>
</dbReference>
<dbReference type="FunFam" id="3.30.160.20:FF:000003">
    <property type="entry name" value="Ribonuclease 3"/>
    <property type="match status" value="1"/>
</dbReference>
<dbReference type="Gene3D" id="3.30.160.20">
    <property type="match status" value="1"/>
</dbReference>
<dbReference type="Gene3D" id="1.10.1520.10">
    <property type="entry name" value="Ribonuclease III domain"/>
    <property type="match status" value="1"/>
</dbReference>
<dbReference type="HAMAP" id="MF_00104">
    <property type="entry name" value="RNase_III"/>
    <property type="match status" value="1"/>
</dbReference>
<dbReference type="InterPro" id="IPR014720">
    <property type="entry name" value="dsRBD_dom"/>
</dbReference>
<dbReference type="InterPro" id="IPR011907">
    <property type="entry name" value="RNase_III"/>
</dbReference>
<dbReference type="InterPro" id="IPR000999">
    <property type="entry name" value="RNase_III_dom"/>
</dbReference>
<dbReference type="InterPro" id="IPR036389">
    <property type="entry name" value="RNase_III_sf"/>
</dbReference>
<dbReference type="NCBIfam" id="TIGR02191">
    <property type="entry name" value="RNaseIII"/>
    <property type="match status" value="1"/>
</dbReference>
<dbReference type="PANTHER" id="PTHR11207:SF0">
    <property type="entry name" value="RIBONUCLEASE 3"/>
    <property type="match status" value="1"/>
</dbReference>
<dbReference type="PANTHER" id="PTHR11207">
    <property type="entry name" value="RIBONUCLEASE III"/>
    <property type="match status" value="1"/>
</dbReference>
<dbReference type="Pfam" id="PF00035">
    <property type="entry name" value="dsrm"/>
    <property type="match status" value="1"/>
</dbReference>
<dbReference type="Pfam" id="PF14622">
    <property type="entry name" value="Ribonucleas_3_3"/>
    <property type="match status" value="1"/>
</dbReference>
<dbReference type="SMART" id="SM00358">
    <property type="entry name" value="DSRM"/>
    <property type="match status" value="1"/>
</dbReference>
<dbReference type="SMART" id="SM00535">
    <property type="entry name" value="RIBOc"/>
    <property type="match status" value="1"/>
</dbReference>
<dbReference type="SUPFAM" id="SSF54768">
    <property type="entry name" value="dsRNA-binding domain-like"/>
    <property type="match status" value="1"/>
</dbReference>
<dbReference type="SUPFAM" id="SSF69065">
    <property type="entry name" value="RNase III domain-like"/>
    <property type="match status" value="1"/>
</dbReference>
<dbReference type="PROSITE" id="PS50137">
    <property type="entry name" value="DS_RBD"/>
    <property type="match status" value="1"/>
</dbReference>
<dbReference type="PROSITE" id="PS00517">
    <property type="entry name" value="RNASE_3_1"/>
    <property type="match status" value="1"/>
</dbReference>
<dbReference type="PROSITE" id="PS50142">
    <property type="entry name" value="RNASE_3_2"/>
    <property type="match status" value="1"/>
</dbReference>
<sequence>MKQLEELLSTSFDIQFNDLTLLETAFTHTSYANEHRLLNVSHNERLEFLGDAVLQLIISEYLFAKYPKKTEGDMSKLRSMIVREESLAGFSRFCSFDAYIKLGKGEEKSGGRRRDTILGDLFEAFLGALLLDKGIDAVRRFLKQVMIPQVEKGNFERVKDYKTCLQEFLQTKGDVAIDYQVISEKGPAHAKQFEVSIVVNGAVLSKGLGKSKKLAEQDAAKNALAQLSEV</sequence>
<protein>
    <recommendedName>
        <fullName evidence="2">Ribonuclease 3</fullName>
        <ecNumber evidence="2">3.1.26.3</ecNumber>
    </recommendedName>
    <alternativeName>
        <fullName evidence="2">Ribonuclease III</fullName>
        <shortName evidence="2">RNase III</shortName>
    </alternativeName>
</protein>
<evidence type="ECO:0000250" key="1"/>
<evidence type="ECO:0000255" key="2">
    <source>
        <dbReference type="HAMAP-Rule" id="MF_00104"/>
    </source>
</evidence>
<evidence type="ECO:0000269" key="3">
    <source>
    </source>
</evidence>
<evidence type="ECO:0000269" key="4">
    <source>
    </source>
</evidence>
<feature type="chain" id="PRO_0000180443" description="Ribonuclease 3">
    <location>
        <begin position="1"/>
        <end position="230"/>
    </location>
</feature>
<feature type="domain" description="RNase III" evidence="2">
    <location>
        <begin position="1"/>
        <end position="134"/>
    </location>
</feature>
<feature type="domain" description="DRBM" evidence="2">
    <location>
        <begin position="160"/>
        <end position="229"/>
    </location>
</feature>
<feature type="active site" evidence="2">
    <location>
        <position position="51"/>
    </location>
</feature>
<feature type="active site" evidence="2">
    <location>
        <position position="123"/>
    </location>
</feature>
<feature type="binding site" evidence="2">
    <location>
        <position position="47"/>
    </location>
    <ligand>
        <name>Mg(2+)</name>
        <dbReference type="ChEBI" id="CHEBI:18420"/>
    </ligand>
</feature>
<feature type="binding site" evidence="2">
    <location>
        <position position="120"/>
    </location>
    <ligand>
        <name>Mg(2+)</name>
        <dbReference type="ChEBI" id="CHEBI:18420"/>
    </ligand>
</feature>
<feature type="binding site" evidence="2">
    <location>
        <position position="123"/>
    </location>
    <ligand>
        <name>Mg(2+)</name>
        <dbReference type="ChEBI" id="CHEBI:18420"/>
    </ligand>
</feature>
<feature type="mutagenesis site" description="No processing of pre-crRNA." evidence="4">
    <original>D</original>
    <variation>A</variation>
    <location>
        <position position="51"/>
    </location>
</feature>
<feature type="mutagenesis site" description="No processing of pre-crRNA." evidence="4">
    <location>
        <begin position="154"/>
        <end position="230"/>
    </location>
</feature>
<comment type="function">
    <text evidence="1">Digests double-stranded RNA. Involved in the processing of primary rRNA transcript to yield the immediate precursors to the large and small rRNAs (23S and 16S). Also processes some mRNAs, and tRNAs when they are encoded in the rRNA operon (By similarity).</text>
</comment>
<comment type="function">
    <text evidence="3 4">CRISPR (clustered regularly interspaced short palindromic repeat) is an adaptive immune system that provides protection against mobile genetic elements (viruses, transposable elements and conjugative plasmids). CRISPR clusters contain spacers, sequences complementary to antecedent mobile elements, and target invading nucleic acids. CRISPR clusters are transcribed and processed into CRISPR RNA (crRNA). In this organism endogenous ribonuclease 3 and Cas9 are required for correct coprocessing of pre-crRNA and the trans-encoded small RNA (tracrRNA). Cas9, crRNA and tracrRNA are required for cleavage of invading DNA (PubMed:21455174, PubMed:24270795).</text>
</comment>
<comment type="catalytic activity">
    <reaction evidence="2">
        <text>Endonucleolytic cleavage to 5'-phosphomonoester.</text>
        <dbReference type="EC" id="3.1.26.3"/>
    </reaction>
</comment>
<comment type="cofactor">
    <cofactor evidence="2">
        <name>Mg(2+)</name>
        <dbReference type="ChEBI" id="CHEBI:18420"/>
    </cofactor>
</comment>
<comment type="subunit">
    <text evidence="2">Homodimer.</text>
</comment>
<comment type="subcellular location">
    <subcellularLocation>
        <location evidence="2">Cytoplasm</location>
    </subcellularLocation>
</comment>
<comment type="disruption phenotype">
    <text evidence="3 4">Loss of correct coprocessing of pre-crRNA and tracrRNA. Loss of immunity against a plasmid with homology to CRISPR spacer sequences.</text>
</comment>
<comment type="similarity">
    <text evidence="2">Belongs to the ribonuclease III family.</text>
</comment>
<gene>
    <name evidence="2" type="primary">rnc</name>
    <name type="synonym">acpA</name>
    <name type="ordered locus">SPy_0531</name>
    <name type="ordered locus">M5005_Spy0438</name>
</gene>
<organism>
    <name type="scientific">Streptococcus pyogenes serotype M1</name>
    <dbReference type="NCBI Taxonomy" id="301447"/>
    <lineage>
        <taxon>Bacteria</taxon>
        <taxon>Bacillati</taxon>
        <taxon>Bacillota</taxon>
        <taxon>Bacilli</taxon>
        <taxon>Lactobacillales</taxon>
        <taxon>Streptococcaceae</taxon>
        <taxon>Streptococcus</taxon>
    </lineage>
</organism>
<proteinExistence type="evidence at protein level"/>
<reference key="1">
    <citation type="journal article" date="2001" name="Proc. Natl. Acad. Sci. U.S.A.">
        <title>Complete genome sequence of an M1 strain of Streptococcus pyogenes.</title>
        <authorList>
            <person name="Ferretti J.J."/>
            <person name="McShan W.M."/>
            <person name="Ajdic D.J."/>
            <person name="Savic D.J."/>
            <person name="Savic G."/>
            <person name="Lyon K."/>
            <person name="Primeaux C."/>
            <person name="Sezate S."/>
            <person name="Suvorov A.N."/>
            <person name="Kenton S."/>
            <person name="Lai H.S."/>
            <person name="Lin S.P."/>
            <person name="Qian Y."/>
            <person name="Jia H.G."/>
            <person name="Najar F.Z."/>
            <person name="Ren Q."/>
            <person name="Zhu H."/>
            <person name="Song L."/>
            <person name="White J."/>
            <person name="Yuan X."/>
            <person name="Clifton S.W."/>
            <person name="Roe B.A."/>
            <person name="McLaughlin R.E."/>
        </authorList>
    </citation>
    <scope>NUCLEOTIDE SEQUENCE [LARGE SCALE GENOMIC DNA]</scope>
    <source>
        <strain>ATCC 700294 / SF370 / Serotype M1</strain>
    </source>
</reference>
<reference key="2">
    <citation type="journal article" date="2005" name="J. Infect. Dis.">
        <title>Evolutionary origin and emergence of a highly successful clone of serotype M1 group A Streptococcus involved multiple horizontal gene transfer events.</title>
        <authorList>
            <person name="Sumby P."/>
            <person name="Porcella S.F."/>
            <person name="Madrigal A.G."/>
            <person name="Barbian K.D."/>
            <person name="Virtaneva K."/>
            <person name="Ricklefs S.M."/>
            <person name="Sturdevant D.E."/>
            <person name="Graham M.R."/>
            <person name="Vuopio-Varkila J."/>
            <person name="Hoe N.P."/>
            <person name="Musser J.M."/>
        </authorList>
    </citation>
    <scope>NUCLEOTIDE SEQUENCE [LARGE SCALE GENOMIC DNA]</scope>
    <source>
        <strain>ATCC BAA-947 / MGAS5005 / Serotype M1</strain>
    </source>
</reference>
<reference key="3">
    <citation type="journal article" date="2011" name="Nature">
        <title>CRISPR RNA maturation by trans-encoded small RNA and host factor RNase III.</title>
        <authorList>
            <person name="Deltcheva E."/>
            <person name="Chylinski K."/>
            <person name="Sharma C.M."/>
            <person name="Gonzales K."/>
            <person name="Chao Y."/>
            <person name="Pirzada Z.A."/>
            <person name="Eckert M.R."/>
            <person name="Vogel J."/>
            <person name="Charpentier E."/>
        </authorList>
    </citation>
    <scope>FUNCTION IN CRISPR-MEDIATED PLASMID DEFENSE</scope>
    <scope>DISRUPTION PHENOTYPE</scope>
    <source>
        <strain>ATCC 700294 / SF370 / Serotype M1</strain>
    </source>
</reference>
<reference key="4">
    <citation type="journal article" date="2014" name="Nucleic Acids Res.">
        <title>Phylogeny of Cas9 determines functional exchangeability of dual-RNA and Cas9 among orthologous type II CRISPR-Cas systems.</title>
        <authorList>
            <person name="Fonfara I."/>
            <person name="Le Rhun A."/>
            <person name="Chylinski K."/>
            <person name="Makarova K.S."/>
            <person name="Lecrivain A.L."/>
            <person name="Bzdrenga J."/>
            <person name="Koonin E.V."/>
            <person name="Charpentier E."/>
        </authorList>
    </citation>
    <scope>FUNCTION IN CRRNA AND TRACRRNA MATURATION</scope>
    <scope>DISRUPTION PHENOTYPE</scope>
    <scope>MUTAGENESIS OF ASP-51 AND 154-ASN--VAL-230</scope>
</reference>
<keyword id="KW-0051">Antiviral defense</keyword>
<keyword id="KW-0963">Cytoplasm</keyword>
<keyword id="KW-0255">Endonuclease</keyword>
<keyword id="KW-0378">Hydrolase</keyword>
<keyword id="KW-0460">Magnesium</keyword>
<keyword id="KW-0479">Metal-binding</keyword>
<keyword id="KW-0507">mRNA processing</keyword>
<keyword id="KW-0540">Nuclease</keyword>
<keyword id="KW-1185">Reference proteome</keyword>
<keyword id="KW-0694">RNA-binding</keyword>
<keyword id="KW-0698">rRNA processing</keyword>
<keyword id="KW-0699">rRNA-binding</keyword>
<keyword id="KW-0819">tRNA processing</keyword>